<organism>
    <name type="scientific">Haemophilus influenzae (strain 86-028NP)</name>
    <dbReference type="NCBI Taxonomy" id="281310"/>
    <lineage>
        <taxon>Bacteria</taxon>
        <taxon>Pseudomonadati</taxon>
        <taxon>Pseudomonadota</taxon>
        <taxon>Gammaproteobacteria</taxon>
        <taxon>Pasteurellales</taxon>
        <taxon>Pasteurellaceae</taxon>
        <taxon>Haemophilus</taxon>
    </lineage>
</organism>
<gene>
    <name evidence="2" type="primary">tuf2</name>
    <name type="synonym">tufB2</name>
    <name type="ordered locus">NTHI0748</name>
</gene>
<sequence length="394" mass="43354">MSKEKFERTKPHVNVGTIGHVDHGKTTLTAAITTVLAKHYGGAARAFDQIDNAPEEKARGITINTSHVEYDTPTRHYAHVDCPGHADYVKNMITGAAQMDGAILVVAATDGPMPQTREHILLGRQVGVPYIIVFLNKCDMVDDEELLELVEMEVRELLSQYDFPGDDTPIVRGSALQALNGVAEWEEKILELANHLDTYIPEPERAIDQPFLLPIEDVFSISGRGTVVTGRVERGIIRTGDEVEIVGIKDTAKTTVTGVEMFRKLLDEGRAGENIGALLRGTKREEIERGQVLAKPGSITPHTDFESEVYVLSKDEGGRHTPFFKGYRPQFYFRTTDVTGTIELPEGVEMVMPGDNIKMTVSLIHPIAMDQGLRFAIREGGRTVGAGVVAKIIK</sequence>
<accession>Q4QMT5</accession>
<evidence type="ECO:0000250" key="1"/>
<evidence type="ECO:0000255" key="2">
    <source>
        <dbReference type="HAMAP-Rule" id="MF_00118"/>
    </source>
</evidence>
<dbReference type="EC" id="3.6.5.3" evidence="2"/>
<dbReference type="EMBL" id="CP000057">
    <property type="protein sequence ID" value="AAX87662.1"/>
    <property type="molecule type" value="Genomic_DNA"/>
</dbReference>
<dbReference type="SMR" id="Q4QMT5"/>
<dbReference type="KEGG" id="hit:NTHI0748"/>
<dbReference type="HOGENOM" id="CLU_007265_0_2_6"/>
<dbReference type="Proteomes" id="UP000002525">
    <property type="component" value="Chromosome"/>
</dbReference>
<dbReference type="GO" id="GO:0005829">
    <property type="term" value="C:cytosol"/>
    <property type="evidence" value="ECO:0007669"/>
    <property type="project" value="TreeGrafter"/>
</dbReference>
<dbReference type="GO" id="GO:0005525">
    <property type="term" value="F:GTP binding"/>
    <property type="evidence" value="ECO:0007669"/>
    <property type="project" value="UniProtKB-UniRule"/>
</dbReference>
<dbReference type="GO" id="GO:0003924">
    <property type="term" value="F:GTPase activity"/>
    <property type="evidence" value="ECO:0007669"/>
    <property type="project" value="InterPro"/>
</dbReference>
<dbReference type="GO" id="GO:0097216">
    <property type="term" value="F:guanosine tetraphosphate binding"/>
    <property type="evidence" value="ECO:0007669"/>
    <property type="project" value="UniProtKB-ARBA"/>
</dbReference>
<dbReference type="GO" id="GO:0003746">
    <property type="term" value="F:translation elongation factor activity"/>
    <property type="evidence" value="ECO:0007669"/>
    <property type="project" value="UniProtKB-UniRule"/>
</dbReference>
<dbReference type="CDD" id="cd01884">
    <property type="entry name" value="EF_Tu"/>
    <property type="match status" value="1"/>
</dbReference>
<dbReference type="CDD" id="cd03697">
    <property type="entry name" value="EFTU_II"/>
    <property type="match status" value="1"/>
</dbReference>
<dbReference type="CDD" id="cd03707">
    <property type="entry name" value="EFTU_III"/>
    <property type="match status" value="1"/>
</dbReference>
<dbReference type="FunFam" id="2.40.30.10:FF:000001">
    <property type="entry name" value="Elongation factor Tu"/>
    <property type="match status" value="1"/>
</dbReference>
<dbReference type="FunFam" id="3.40.50.300:FF:000003">
    <property type="entry name" value="Elongation factor Tu"/>
    <property type="match status" value="1"/>
</dbReference>
<dbReference type="Gene3D" id="3.40.50.300">
    <property type="entry name" value="P-loop containing nucleotide triphosphate hydrolases"/>
    <property type="match status" value="1"/>
</dbReference>
<dbReference type="Gene3D" id="2.40.30.10">
    <property type="entry name" value="Translation factors"/>
    <property type="match status" value="2"/>
</dbReference>
<dbReference type="HAMAP" id="MF_00118_B">
    <property type="entry name" value="EF_Tu_B"/>
    <property type="match status" value="1"/>
</dbReference>
<dbReference type="InterPro" id="IPR041709">
    <property type="entry name" value="EF-Tu_GTP-bd"/>
</dbReference>
<dbReference type="InterPro" id="IPR050055">
    <property type="entry name" value="EF-Tu_GTPase"/>
</dbReference>
<dbReference type="InterPro" id="IPR004161">
    <property type="entry name" value="EFTu-like_2"/>
</dbReference>
<dbReference type="InterPro" id="IPR033720">
    <property type="entry name" value="EFTU_2"/>
</dbReference>
<dbReference type="InterPro" id="IPR031157">
    <property type="entry name" value="G_TR_CS"/>
</dbReference>
<dbReference type="InterPro" id="IPR027417">
    <property type="entry name" value="P-loop_NTPase"/>
</dbReference>
<dbReference type="InterPro" id="IPR005225">
    <property type="entry name" value="Small_GTP-bd"/>
</dbReference>
<dbReference type="InterPro" id="IPR000795">
    <property type="entry name" value="T_Tr_GTP-bd_dom"/>
</dbReference>
<dbReference type="InterPro" id="IPR009000">
    <property type="entry name" value="Transl_B-barrel_sf"/>
</dbReference>
<dbReference type="InterPro" id="IPR009001">
    <property type="entry name" value="Transl_elong_EF1A/Init_IF2_C"/>
</dbReference>
<dbReference type="InterPro" id="IPR004541">
    <property type="entry name" value="Transl_elong_EFTu/EF1A_bac/org"/>
</dbReference>
<dbReference type="InterPro" id="IPR004160">
    <property type="entry name" value="Transl_elong_EFTu/EF1A_C"/>
</dbReference>
<dbReference type="NCBIfam" id="TIGR00485">
    <property type="entry name" value="EF-Tu"/>
    <property type="match status" value="1"/>
</dbReference>
<dbReference type="NCBIfam" id="NF000766">
    <property type="entry name" value="PRK00049.1"/>
    <property type="match status" value="1"/>
</dbReference>
<dbReference type="NCBIfam" id="NF009372">
    <property type="entry name" value="PRK12735.1"/>
    <property type="match status" value="1"/>
</dbReference>
<dbReference type="NCBIfam" id="NF009373">
    <property type="entry name" value="PRK12736.1"/>
    <property type="match status" value="1"/>
</dbReference>
<dbReference type="NCBIfam" id="TIGR00231">
    <property type="entry name" value="small_GTP"/>
    <property type="match status" value="1"/>
</dbReference>
<dbReference type="PANTHER" id="PTHR43721:SF22">
    <property type="entry name" value="ELONGATION FACTOR TU, MITOCHONDRIAL"/>
    <property type="match status" value="1"/>
</dbReference>
<dbReference type="PANTHER" id="PTHR43721">
    <property type="entry name" value="ELONGATION FACTOR TU-RELATED"/>
    <property type="match status" value="1"/>
</dbReference>
<dbReference type="Pfam" id="PF00009">
    <property type="entry name" value="GTP_EFTU"/>
    <property type="match status" value="1"/>
</dbReference>
<dbReference type="Pfam" id="PF03144">
    <property type="entry name" value="GTP_EFTU_D2"/>
    <property type="match status" value="1"/>
</dbReference>
<dbReference type="Pfam" id="PF03143">
    <property type="entry name" value="GTP_EFTU_D3"/>
    <property type="match status" value="1"/>
</dbReference>
<dbReference type="PRINTS" id="PR00315">
    <property type="entry name" value="ELONGATNFCT"/>
</dbReference>
<dbReference type="SUPFAM" id="SSF50465">
    <property type="entry name" value="EF-Tu/eEF-1alpha/eIF2-gamma C-terminal domain"/>
    <property type="match status" value="1"/>
</dbReference>
<dbReference type="SUPFAM" id="SSF52540">
    <property type="entry name" value="P-loop containing nucleoside triphosphate hydrolases"/>
    <property type="match status" value="1"/>
</dbReference>
<dbReference type="SUPFAM" id="SSF50447">
    <property type="entry name" value="Translation proteins"/>
    <property type="match status" value="1"/>
</dbReference>
<dbReference type="PROSITE" id="PS00301">
    <property type="entry name" value="G_TR_1"/>
    <property type="match status" value="1"/>
</dbReference>
<dbReference type="PROSITE" id="PS51722">
    <property type="entry name" value="G_TR_2"/>
    <property type="match status" value="1"/>
</dbReference>
<proteinExistence type="inferred from homology"/>
<name>EFTU2_HAEI8</name>
<feature type="chain" id="PRO_0000337398" description="Elongation factor Tu 2">
    <location>
        <begin position="1"/>
        <end position="394"/>
    </location>
</feature>
<feature type="domain" description="tr-type G">
    <location>
        <begin position="10"/>
        <end position="204"/>
    </location>
</feature>
<feature type="region of interest" description="G1" evidence="1">
    <location>
        <begin position="19"/>
        <end position="26"/>
    </location>
</feature>
<feature type="region of interest" description="G2" evidence="1">
    <location>
        <begin position="60"/>
        <end position="64"/>
    </location>
</feature>
<feature type="region of interest" description="G3" evidence="1">
    <location>
        <begin position="81"/>
        <end position="84"/>
    </location>
</feature>
<feature type="region of interest" description="G4" evidence="1">
    <location>
        <begin position="136"/>
        <end position="139"/>
    </location>
</feature>
<feature type="region of interest" description="G5" evidence="1">
    <location>
        <begin position="174"/>
        <end position="176"/>
    </location>
</feature>
<feature type="binding site" evidence="2">
    <location>
        <begin position="19"/>
        <end position="26"/>
    </location>
    <ligand>
        <name>GTP</name>
        <dbReference type="ChEBI" id="CHEBI:37565"/>
    </ligand>
</feature>
<feature type="binding site" evidence="2">
    <location>
        <position position="26"/>
    </location>
    <ligand>
        <name>Mg(2+)</name>
        <dbReference type="ChEBI" id="CHEBI:18420"/>
    </ligand>
</feature>
<feature type="binding site" evidence="2">
    <location>
        <begin position="81"/>
        <end position="85"/>
    </location>
    <ligand>
        <name>GTP</name>
        <dbReference type="ChEBI" id="CHEBI:37565"/>
    </ligand>
</feature>
<feature type="binding site" evidence="2">
    <location>
        <begin position="136"/>
        <end position="139"/>
    </location>
    <ligand>
        <name>GTP</name>
        <dbReference type="ChEBI" id="CHEBI:37565"/>
    </ligand>
</feature>
<protein>
    <recommendedName>
        <fullName evidence="2">Elongation factor Tu 2</fullName>
        <shortName evidence="2">EF-Tu 2</shortName>
        <ecNumber evidence="2">3.6.5.3</ecNumber>
    </recommendedName>
</protein>
<comment type="function">
    <text evidence="2">GTP hydrolase that promotes the GTP-dependent binding of aminoacyl-tRNA to the A-site of ribosomes during protein biosynthesis.</text>
</comment>
<comment type="catalytic activity">
    <reaction evidence="2">
        <text>GTP + H2O = GDP + phosphate + H(+)</text>
        <dbReference type="Rhea" id="RHEA:19669"/>
        <dbReference type="ChEBI" id="CHEBI:15377"/>
        <dbReference type="ChEBI" id="CHEBI:15378"/>
        <dbReference type="ChEBI" id="CHEBI:37565"/>
        <dbReference type="ChEBI" id="CHEBI:43474"/>
        <dbReference type="ChEBI" id="CHEBI:58189"/>
        <dbReference type="EC" id="3.6.5.3"/>
    </reaction>
    <physiologicalReaction direction="left-to-right" evidence="2">
        <dbReference type="Rhea" id="RHEA:19670"/>
    </physiologicalReaction>
</comment>
<comment type="subunit">
    <text evidence="2">Monomer.</text>
</comment>
<comment type="subcellular location">
    <subcellularLocation>
        <location evidence="2">Cytoplasm</location>
    </subcellularLocation>
</comment>
<comment type="similarity">
    <text evidence="2">Belongs to the TRAFAC class translation factor GTPase superfamily. Classic translation factor GTPase family. EF-Tu/EF-1A subfamily.</text>
</comment>
<reference key="1">
    <citation type="journal article" date="2005" name="J. Bacteriol.">
        <title>Genomic sequence of an otitis media isolate of nontypeable Haemophilus influenzae: comparative study with H. influenzae serotype d, strain KW20.</title>
        <authorList>
            <person name="Harrison A."/>
            <person name="Dyer D.W."/>
            <person name="Gillaspy A."/>
            <person name="Ray W.C."/>
            <person name="Mungur R."/>
            <person name="Carson M.B."/>
            <person name="Zhong H."/>
            <person name="Gipson J."/>
            <person name="Gipson M."/>
            <person name="Johnson L.S."/>
            <person name="Lewis L."/>
            <person name="Bakaletz L.O."/>
            <person name="Munson R.S. Jr."/>
        </authorList>
    </citation>
    <scope>NUCLEOTIDE SEQUENCE [LARGE SCALE GENOMIC DNA]</scope>
    <source>
        <strain>86-028NP</strain>
    </source>
</reference>
<keyword id="KW-0963">Cytoplasm</keyword>
<keyword id="KW-0251">Elongation factor</keyword>
<keyword id="KW-0342">GTP-binding</keyword>
<keyword id="KW-0378">Hydrolase</keyword>
<keyword id="KW-0460">Magnesium</keyword>
<keyword id="KW-0479">Metal-binding</keyword>
<keyword id="KW-0547">Nucleotide-binding</keyword>
<keyword id="KW-0648">Protein biosynthesis</keyword>